<gene>
    <name evidence="1" type="primary">ycgL</name>
    <name type="ordered locus">SPAB_01403</name>
</gene>
<protein>
    <recommendedName>
        <fullName evidence="1">Protein YcgL</fullName>
    </recommendedName>
</protein>
<evidence type="ECO:0000255" key="1">
    <source>
        <dbReference type="HAMAP-Rule" id="MF_01866"/>
    </source>
</evidence>
<evidence type="ECO:0000256" key="2">
    <source>
        <dbReference type="SAM" id="MobiDB-lite"/>
    </source>
</evidence>
<evidence type="ECO:0000305" key="3"/>
<accession>A9MVV4</accession>
<reference key="1">
    <citation type="submission" date="2007-11" db="EMBL/GenBank/DDBJ databases">
        <authorList>
            <consortium name="The Salmonella enterica serovar Paratyphi B Genome Sequencing Project"/>
            <person name="McClelland M."/>
            <person name="Sanderson E.K."/>
            <person name="Porwollik S."/>
            <person name="Spieth J."/>
            <person name="Clifton W.S."/>
            <person name="Fulton R."/>
            <person name="Cordes M."/>
            <person name="Wollam A."/>
            <person name="Shah N."/>
            <person name="Pepin K."/>
            <person name="Bhonagiri V."/>
            <person name="Nash W."/>
            <person name="Johnson M."/>
            <person name="Thiruvilangam P."/>
            <person name="Wilson R."/>
        </authorList>
    </citation>
    <scope>NUCLEOTIDE SEQUENCE [LARGE SCALE GENOMIC DNA]</scope>
    <source>
        <strain>ATCC BAA-1250 / SPB7</strain>
    </source>
</reference>
<organism>
    <name type="scientific">Salmonella paratyphi B (strain ATCC BAA-1250 / SPB7)</name>
    <dbReference type="NCBI Taxonomy" id="1016998"/>
    <lineage>
        <taxon>Bacteria</taxon>
        <taxon>Pseudomonadati</taxon>
        <taxon>Pseudomonadota</taxon>
        <taxon>Gammaproteobacteria</taxon>
        <taxon>Enterobacterales</taxon>
        <taxon>Enterobacteriaceae</taxon>
        <taxon>Salmonella</taxon>
    </lineage>
</organism>
<comment type="sequence caution" evidence="3">
    <conflict type="erroneous initiation">
        <sequence resource="EMBL-CDS" id="ABX66810"/>
    </conflict>
</comment>
<feature type="chain" id="PRO_0000375358" description="Protein YcgL">
    <location>
        <begin position="1"/>
        <end position="110"/>
    </location>
</feature>
<feature type="domain" description="YcgL" evidence="1">
    <location>
        <begin position="14"/>
        <end position="98"/>
    </location>
</feature>
<feature type="region of interest" description="Disordered" evidence="2">
    <location>
        <begin position="87"/>
        <end position="110"/>
    </location>
</feature>
<feature type="compositionally biased region" description="Polar residues" evidence="2">
    <location>
        <begin position="97"/>
        <end position="110"/>
    </location>
</feature>
<proteinExistence type="inferred from homology"/>
<sequence>MRQVTIPLIQSKSMFCVIYRSSKRDQTYLYVEKKDDFSRVPEALMKGFGQPQLAMMLPLDGRKKLVNAELEKVKQALSEQGYYLQLPPPPEDLLKQHLSSVGQNTSPADR</sequence>
<dbReference type="EMBL" id="CP000886">
    <property type="protein sequence ID" value="ABX66810.1"/>
    <property type="status" value="ALT_INIT"/>
    <property type="molecule type" value="Genomic_DNA"/>
</dbReference>
<dbReference type="SMR" id="A9MVV4"/>
<dbReference type="KEGG" id="spq:SPAB_01403"/>
<dbReference type="PATRIC" id="fig|1016998.12.peg.1322"/>
<dbReference type="HOGENOM" id="CLU_155118_1_0_6"/>
<dbReference type="BioCyc" id="SENT1016998:SPAB_RS05745-MONOMER"/>
<dbReference type="Proteomes" id="UP000008556">
    <property type="component" value="Chromosome"/>
</dbReference>
<dbReference type="Gene3D" id="3.10.510.20">
    <property type="entry name" value="YcgL domain"/>
    <property type="match status" value="1"/>
</dbReference>
<dbReference type="HAMAP" id="MF_01866">
    <property type="entry name" value="UPF0745"/>
    <property type="match status" value="1"/>
</dbReference>
<dbReference type="InterPro" id="IPR038068">
    <property type="entry name" value="YcgL-like_sf"/>
</dbReference>
<dbReference type="InterPro" id="IPR027354">
    <property type="entry name" value="YcgL_dom"/>
</dbReference>
<dbReference type="PANTHER" id="PTHR38109">
    <property type="entry name" value="PROTEIN YCGL"/>
    <property type="match status" value="1"/>
</dbReference>
<dbReference type="PANTHER" id="PTHR38109:SF1">
    <property type="entry name" value="PROTEIN YCGL"/>
    <property type="match status" value="1"/>
</dbReference>
<dbReference type="Pfam" id="PF05166">
    <property type="entry name" value="YcgL"/>
    <property type="match status" value="1"/>
</dbReference>
<dbReference type="SUPFAM" id="SSF160191">
    <property type="entry name" value="YcgL-like"/>
    <property type="match status" value="1"/>
</dbReference>
<dbReference type="PROSITE" id="PS51648">
    <property type="entry name" value="YCGL"/>
    <property type="match status" value="1"/>
</dbReference>
<name>YCGL_SALPB</name>